<gene>
    <name evidence="1" type="primary">rsmJ</name>
    <name type="ordered locus">PputW619_4104</name>
</gene>
<sequence length="258" mass="27835">MEEQGMGIRVEAMSPEYAHQATAWAERLGLPLQDDAAGFAVQVGADGLQIQQLGPQAPGPVRVDFVDGQAAHRRQFGGGNGQMIAKAVGIAQGVRPQVLDATAGLGKDAFVLASLGCQMTLIERQPLIAALLEDGLTRARSDDEVGPIVGRMRLLTGNAIERMRNWEGEAPQVIYLDPMFPHRDKSALVKKEMRVFRPLVGDDLDAPALLEAALALASHRVVVKRPRKAPIIDGPKPSHSLEGKSSRYDIYPKKALKA</sequence>
<reference key="1">
    <citation type="submission" date="2008-02" db="EMBL/GenBank/DDBJ databases">
        <title>Complete sequence of Pseudomonas putida W619.</title>
        <authorList>
            <person name="Copeland A."/>
            <person name="Lucas S."/>
            <person name="Lapidus A."/>
            <person name="Barry K."/>
            <person name="Detter J.C."/>
            <person name="Glavina del Rio T."/>
            <person name="Dalin E."/>
            <person name="Tice H."/>
            <person name="Pitluck S."/>
            <person name="Chain P."/>
            <person name="Malfatti S."/>
            <person name="Shin M."/>
            <person name="Vergez L."/>
            <person name="Schmutz J."/>
            <person name="Larimer F."/>
            <person name="Land M."/>
            <person name="Hauser L."/>
            <person name="Kyrpides N."/>
            <person name="Kim E."/>
            <person name="Taghavi S."/>
            <person name="Vangronsveld D."/>
            <person name="van der Lelie D."/>
            <person name="Richardson P."/>
        </authorList>
    </citation>
    <scope>NUCLEOTIDE SEQUENCE [LARGE SCALE GENOMIC DNA]</scope>
    <source>
        <strain>W619</strain>
    </source>
</reference>
<proteinExistence type="inferred from homology"/>
<dbReference type="EC" id="2.1.1.242" evidence="1"/>
<dbReference type="EMBL" id="CP000949">
    <property type="protein sequence ID" value="ACA74584.1"/>
    <property type="molecule type" value="Genomic_DNA"/>
</dbReference>
<dbReference type="SMR" id="B1JBT2"/>
<dbReference type="STRING" id="390235.PputW619_4104"/>
<dbReference type="KEGG" id="ppw:PputW619_4104"/>
<dbReference type="eggNOG" id="COG0742">
    <property type="taxonomic scope" value="Bacteria"/>
</dbReference>
<dbReference type="HOGENOM" id="CLU_076324_0_1_6"/>
<dbReference type="OrthoDB" id="3191794at2"/>
<dbReference type="GO" id="GO:0005737">
    <property type="term" value="C:cytoplasm"/>
    <property type="evidence" value="ECO:0007669"/>
    <property type="project" value="UniProtKB-SubCell"/>
</dbReference>
<dbReference type="GO" id="GO:0008990">
    <property type="term" value="F:rRNA (guanine-N2-)-methyltransferase activity"/>
    <property type="evidence" value="ECO:0007669"/>
    <property type="project" value="UniProtKB-UniRule"/>
</dbReference>
<dbReference type="Gene3D" id="3.40.50.150">
    <property type="entry name" value="Vaccinia Virus protein VP39"/>
    <property type="match status" value="1"/>
</dbReference>
<dbReference type="HAMAP" id="MF_01523">
    <property type="entry name" value="16SrRNA_methyltr_J"/>
    <property type="match status" value="1"/>
</dbReference>
<dbReference type="InterPro" id="IPR007536">
    <property type="entry name" value="16SrRNA_methylTrfase_J"/>
</dbReference>
<dbReference type="InterPro" id="IPR029063">
    <property type="entry name" value="SAM-dependent_MTases_sf"/>
</dbReference>
<dbReference type="PANTHER" id="PTHR36112">
    <property type="entry name" value="RIBOSOMAL RNA SMALL SUBUNIT METHYLTRANSFERASE J"/>
    <property type="match status" value="1"/>
</dbReference>
<dbReference type="PANTHER" id="PTHR36112:SF1">
    <property type="entry name" value="RIBOSOMAL RNA SMALL SUBUNIT METHYLTRANSFERASE J"/>
    <property type="match status" value="1"/>
</dbReference>
<dbReference type="Pfam" id="PF04445">
    <property type="entry name" value="SAM_MT"/>
    <property type="match status" value="1"/>
</dbReference>
<dbReference type="SUPFAM" id="SSF53335">
    <property type="entry name" value="S-adenosyl-L-methionine-dependent methyltransferases"/>
    <property type="match status" value="1"/>
</dbReference>
<keyword id="KW-0963">Cytoplasm</keyword>
<keyword id="KW-0489">Methyltransferase</keyword>
<keyword id="KW-0698">rRNA processing</keyword>
<keyword id="KW-0949">S-adenosyl-L-methionine</keyword>
<keyword id="KW-0808">Transferase</keyword>
<accession>B1JBT2</accession>
<evidence type="ECO:0000255" key="1">
    <source>
        <dbReference type="HAMAP-Rule" id="MF_01523"/>
    </source>
</evidence>
<evidence type="ECO:0000256" key="2">
    <source>
        <dbReference type="SAM" id="MobiDB-lite"/>
    </source>
</evidence>
<name>RSMJ_PSEPW</name>
<feature type="chain" id="PRO_1000198505" description="Ribosomal RNA small subunit methyltransferase J">
    <location>
        <begin position="1"/>
        <end position="258"/>
    </location>
</feature>
<feature type="region of interest" description="Disordered" evidence="2">
    <location>
        <begin position="232"/>
        <end position="258"/>
    </location>
</feature>
<feature type="compositionally biased region" description="Basic and acidic residues" evidence="2">
    <location>
        <begin position="239"/>
        <end position="252"/>
    </location>
</feature>
<feature type="binding site" evidence="1">
    <location>
        <begin position="123"/>
        <end position="124"/>
    </location>
    <ligand>
        <name>S-adenosyl-L-methionine</name>
        <dbReference type="ChEBI" id="CHEBI:59789"/>
    </ligand>
</feature>
<feature type="binding site" evidence="1">
    <location>
        <position position="177"/>
    </location>
    <ligand>
        <name>S-adenosyl-L-methionine</name>
        <dbReference type="ChEBI" id="CHEBI:59789"/>
    </ligand>
</feature>
<organism>
    <name type="scientific">Pseudomonas putida (strain W619)</name>
    <dbReference type="NCBI Taxonomy" id="390235"/>
    <lineage>
        <taxon>Bacteria</taxon>
        <taxon>Pseudomonadati</taxon>
        <taxon>Pseudomonadota</taxon>
        <taxon>Gammaproteobacteria</taxon>
        <taxon>Pseudomonadales</taxon>
        <taxon>Pseudomonadaceae</taxon>
        <taxon>Pseudomonas</taxon>
    </lineage>
</organism>
<comment type="function">
    <text evidence="1">Specifically methylates the guanosine in position 1516 of 16S rRNA.</text>
</comment>
<comment type="catalytic activity">
    <reaction evidence="1">
        <text>guanosine(1516) in 16S rRNA + S-adenosyl-L-methionine = N(2)-methylguanosine(1516) in 16S rRNA + S-adenosyl-L-homocysteine + H(+)</text>
        <dbReference type="Rhea" id="RHEA:43220"/>
        <dbReference type="Rhea" id="RHEA-COMP:10412"/>
        <dbReference type="Rhea" id="RHEA-COMP:10413"/>
        <dbReference type="ChEBI" id="CHEBI:15378"/>
        <dbReference type="ChEBI" id="CHEBI:57856"/>
        <dbReference type="ChEBI" id="CHEBI:59789"/>
        <dbReference type="ChEBI" id="CHEBI:74269"/>
        <dbReference type="ChEBI" id="CHEBI:74481"/>
        <dbReference type="EC" id="2.1.1.242"/>
    </reaction>
</comment>
<comment type="subcellular location">
    <subcellularLocation>
        <location evidence="1">Cytoplasm</location>
    </subcellularLocation>
</comment>
<comment type="similarity">
    <text evidence="1">Belongs to the methyltransferase superfamily. RsmJ family.</text>
</comment>
<protein>
    <recommendedName>
        <fullName evidence="1">Ribosomal RNA small subunit methyltransferase J</fullName>
        <ecNumber evidence="1">2.1.1.242</ecNumber>
    </recommendedName>
    <alternativeName>
        <fullName evidence="1">16S rRNA m2G1516 methyltransferase</fullName>
    </alternativeName>
    <alternativeName>
        <fullName evidence="1">rRNA (guanine-N(2)-)-methyltransferase</fullName>
    </alternativeName>
</protein>